<comment type="function">
    <text evidence="1">Part of the ABC transporter complex LolCDE involved in the translocation of mature outer membrane-directed lipoproteins, from the inner membrane to the periplasmic chaperone, LolA. Responsible for the formation of the LolA-lipoprotein complex in an ATP-dependent manner.</text>
</comment>
<comment type="subunit">
    <text evidence="1">The complex is composed of two ATP-binding proteins (LolD) and two transmembrane proteins (LolC and LolE).</text>
</comment>
<comment type="subcellular location">
    <subcellularLocation>
        <location evidence="1">Cell inner membrane</location>
        <topology evidence="1">Peripheral membrane protein</topology>
    </subcellularLocation>
</comment>
<comment type="similarity">
    <text evidence="1">Belongs to the ABC transporter superfamily. Lipoprotein translocase (TC 3.A.1.125) family.</text>
</comment>
<name>LOLD_SYNC1</name>
<feature type="chain" id="PRO_0000272116" description="Lipoprotein-releasing system ATP-binding protein LolD">
    <location>
        <begin position="1"/>
        <end position="227"/>
    </location>
</feature>
<feature type="domain" description="ABC transporter" evidence="1">
    <location>
        <begin position="8"/>
        <end position="226"/>
    </location>
</feature>
<feature type="binding site" evidence="1">
    <location>
        <begin position="44"/>
        <end position="51"/>
    </location>
    <ligand>
        <name>ATP</name>
        <dbReference type="ChEBI" id="CHEBI:30616"/>
    </ligand>
</feature>
<reference key="1">
    <citation type="submission" date="2005-10" db="EMBL/GenBank/DDBJ databases">
        <title>Complete sequence of Pelobacter carbinolicus DSM 2380.</title>
        <authorList>
            <person name="Copeland A."/>
            <person name="Lucas S."/>
            <person name="Lapidus A."/>
            <person name="Barry K."/>
            <person name="Detter J.C."/>
            <person name="Glavina T."/>
            <person name="Hammon N."/>
            <person name="Israni S."/>
            <person name="Pitluck S."/>
            <person name="Chertkov O."/>
            <person name="Schmutz J."/>
            <person name="Larimer F."/>
            <person name="Land M."/>
            <person name="Kyrpides N."/>
            <person name="Ivanova N."/>
            <person name="Richardson P."/>
        </authorList>
    </citation>
    <scope>NUCLEOTIDE SEQUENCE [LARGE SCALE GENOMIC DNA]</scope>
    <source>
        <strain>DSM 2380 / NBRC 103641 / GraBd1</strain>
    </source>
</reference>
<gene>
    <name evidence="1" type="primary">lolD</name>
    <name type="ordered locus">Pcar_1250</name>
</gene>
<proteinExistence type="inferred from homology"/>
<accession>Q3A558</accession>
<organism>
    <name type="scientific">Syntrophotalea carbinolica (strain DSM 2380 / NBRC 103641 / GraBd1)</name>
    <name type="common">Pelobacter carbinolicus</name>
    <dbReference type="NCBI Taxonomy" id="338963"/>
    <lineage>
        <taxon>Bacteria</taxon>
        <taxon>Pseudomonadati</taxon>
        <taxon>Thermodesulfobacteriota</taxon>
        <taxon>Desulfuromonadia</taxon>
        <taxon>Desulfuromonadales</taxon>
        <taxon>Syntrophotaleaceae</taxon>
        <taxon>Syntrophotalea</taxon>
    </lineage>
</organism>
<sequence length="227" mass="24594">MSRGAAMIEVTNLCKSFVSGTRRVDVLSHVDMKIDAGERVAVVGASGAGKTSLMHILGGLDRPTSGDVLYDKQDIFSLKGAGLDDFRNRTLGFVFQFHQLLPEFTALENVMLPALIARWSRAKAKSAARELLTEVGLESRLSHKPGELSGGEQQRVAIARALVGSPRVLFADEPTGNLDSNTSESIYRLLSRLHETRGLTLFIVTHDARLAAGLDRVVHMADGRITG</sequence>
<evidence type="ECO:0000255" key="1">
    <source>
        <dbReference type="HAMAP-Rule" id="MF_01708"/>
    </source>
</evidence>
<dbReference type="EC" id="7.6.2.-" evidence="1"/>
<dbReference type="EMBL" id="CP000142">
    <property type="protein sequence ID" value="ABA88499.1"/>
    <property type="molecule type" value="Genomic_DNA"/>
</dbReference>
<dbReference type="SMR" id="Q3A558"/>
<dbReference type="STRING" id="338963.Pcar_1250"/>
<dbReference type="KEGG" id="pca:Pcar_1250"/>
<dbReference type="eggNOG" id="COG1136">
    <property type="taxonomic scope" value="Bacteria"/>
</dbReference>
<dbReference type="HOGENOM" id="CLU_000604_1_22_7"/>
<dbReference type="OrthoDB" id="9809450at2"/>
<dbReference type="Proteomes" id="UP000002534">
    <property type="component" value="Chromosome"/>
</dbReference>
<dbReference type="GO" id="GO:0005886">
    <property type="term" value="C:plasma membrane"/>
    <property type="evidence" value="ECO:0007669"/>
    <property type="project" value="UniProtKB-SubCell"/>
</dbReference>
<dbReference type="GO" id="GO:0005524">
    <property type="term" value="F:ATP binding"/>
    <property type="evidence" value="ECO:0007669"/>
    <property type="project" value="UniProtKB-KW"/>
</dbReference>
<dbReference type="GO" id="GO:0016887">
    <property type="term" value="F:ATP hydrolysis activity"/>
    <property type="evidence" value="ECO:0007669"/>
    <property type="project" value="InterPro"/>
</dbReference>
<dbReference type="GO" id="GO:0022857">
    <property type="term" value="F:transmembrane transporter activity"/>
    <property type="evidence" value="ECO:0007669"/>
    <property type="project" value="TreeGrafter"/>
</dbReference>
<dbReference type="GO" id="GO:0044874">
    <property type="term" value="P:lipoprotein localization to outer membrane"/>
    <property type="evidence" value="ECO:0007669"/>
    <property type="project" value="TreeGrafter"/>
</dbReference>
<dbReference type="GO" id="GO:0089705">
    <property type="term" value="P:protein localization to outer membrane"/>
    <property type="evidence" value="ECO:0007669"/>
    <property type="project" value="TreeGrafter"/>
</dbReference>
<dbReference type="CDD" id="cd03255">
    <property type="entry name" value="ABC_MJ0796_LolCDE_FtsE"/>
    <property type="match status" value="1"/>
</dbReference>
<dbReference type="FunFam" id="3.40.50.300:FF:000230">
    <property type="entry name" value="Lipoprotein-releasing system ATP-binding protein LolD"/>
    <property type="match status" value="1"/>
</dbReference>
<dbReference type="Gene3D" id="3.40.50.300">
    <property type="entry name" value="P-loop containing nucleotide triphosphate hydrolases"/>
    <property type="match status" value="1"/>
</dbReference>
<dbReference type="InterPro" id="IPR003593">
    <property type="entry name" value="AAA+_ATPase"/>
</dbReference>
<dbReference type="InterPro" id="IPR003439">
    <property type="entry name" value="ABC_transporter-like_ATP-bd"/>
</dbReference>
<dbReference type="InterPro" id="IPR017871">
    <property type="entry name" value="ABC_transporter-like_CS"/>
</dbReference>
<dbReference type="InterPro" id="IPR015854">
    <property type="entry name" value="ABC_transpr_LolD-like"/>
</dbReference>
<dbReference type="InterPro" id="IPR017911">
    <property type="entry name" value="MacB-like_ATP-bd"/>
</dbReference>
<dbReference type="InterPro" id="IPR027417">
    <property type="entry name" value="P-loop_NTPase"/>
</dbReference>
<dbReference type="PANTHER" id="PTHR24220">
    <property type="entry name" value="IMPORT ATP-BINDING PROTEIN"/>
    <property type="match status" value="1"/>
</dbReference>
<dbReference type="PANTHER" id="PTHR24220:SF689">
    <property type="entry name" value="LIPOPROTEIN-RELEASING SYSTEM ATP-BINDING PROTEIN LOLD"/>
    <property type="match status" value="1"/>
</dbReference>
<dbReference type="Pfam" id="PF00005">
    <property type="entry name" value="ABC_tran"/>
    <property type="match status" value="1"/>
</dbReference>
<dbReference type="SMART" id="SM00382">
    <property type="entry name" value="AAA"/>
    <property type="match status" value="1"/>
</dbReference>
<dbReference type="SUPFAM" id="SSF52540">
    <property type="entry name" value="P-loop containing nucleoside triphosphate hydrolases"/>
    <property type="match status" value="1"/>
</dbReference>
<dbReference type="PROSITE" id="PS00211">
    <property type="entry name" value="ABC_TRANSPORTER_1"/>
    <property type="match status" value="1"/>
</dbReference>
<dbReference type="PROSITE" id="PS50893">
    <property type="entry name" value="ABC_TRANSPORTER_2"/>
    <property type="match status" value="1"/>
</dbReference>
<dbReference type="PROSITE" id="PS51244">
    <property type="entry name" value="LOLD"/>
    <property type="match status" value="1"/>
</dbReference>
<protein>
    <recommendedName>
        <fullName evidence="1">Lipoprotein-releasing system ATP-binding protein LolD</fullName>
        <ecNumber evidence="1">7.6.2.-</ecNumber>
    </recommendedName>
</protein>
<keyword id="KW-0067">ATP-binding</keyword>
<keyword id="KW-0997">Cell inner membrane</keyword>
<keyword id="KW-1003">Cell membrane</keyword>
<keyword id="KW-0472">Membrane</keyword>
<keyword id="KW-0547">Nucleotide-binding</keyword>
<keyword id="KW-1185">Reference proteome</keyword>
<keyword id="KW-1278">Translocase</keyword>
<keyword id="KW-0813">Transport</keyword>